<sequence>MQKARIKLASTNVRSLEEVANQIKQIAERTGVRMSGPIPLPTKRIRIVTRKSPDGEGSATFDRWELRIHKRLIDIEADERAMRQIMRIRVPEDVTIEIELIS</sequence>
<name>RS10_PYRAB</name>
<organism>
    <name type="scientific">Pyrococcus abyssi (strain GE5 / Orsay)</name>
    <dbReference type="NCBI Taxonomy" id="272844"/>
    <lineage>
        <taxon>Archaea</taxon>
        <taxon>Methanobacteriati</taxon>
        <taxon>Methanobacteriota</taxon>
        <taxon>Thermococci</taxon>
        <taxon>Thermococcales</taxon>
        <taxon>Thermococcaceae</taxon>
        <taxon>Pyrococcus</taxon>
    </lineage>
</organism>
<accession>Q9V0V6</accession>
<accession>G8ZJE6</accession>
<proteinExistence type="evidence at protein level"/>
<comment type="function">
    <text evidence="1">Involved in the binding of tRNA to the ribosomes.</text>
</comment>
<comment type="subunit">
    <text evidence="1">Part of the 30S ribosomal subunit.</text>
</comment>
<comment type="similarity">
    <text evidence="1">Belongs to the universal ribosomal protein uS10 family.</text>
</comment>
<feature type="chain" id="PRO_0000146653" description="Small ribosomal subunit protein uS10">
    <location>
        <begin position="1"/>
        <end position="102"/>
    </location>
</feature>
<feature type="strand" evidence="3">
    <location>
        <begin position="3"/>
        <end position="11"/>
    </location>
</feature>
<feature type="helix" evidence="3">
    <location>
        <begin position="13"/>
        <end position="28"/>
    </location>
</feature>
<feature type="strand" evidence="3">
    <location>
        <begin position="29"/>
        <end position="31"/>
    </location>
</feature>
<feature type="strand" evidence="3">
    <location>
        <begin position="34"/>
        <end position="50"/>
    </location>
</feature>
<feature type="strand" evidence="3">
    <location>
        <begin position="53"/>
        <end position="55"/>
    </location>
</feature>
<feature type="strand" evidence="3">
    <location>
        <begin position="61"/>
        <end position="76"/>
    </location>
</feature>
<feature type="helix" evidence="3">
    <location>
        <begin position="79"/>
        <end position="86"/>
    </location>
</feature>
<feature type="strand" evidence="3">
    <location>
        <begin position="94"/>
        <end position="100"/>
    </location>
</feature>
<dbReference type="EMBL" id="AJ248285">
    <property type="protein sequence ID" value="CAB49597.1"/>
    <property type="molecule type" value="Genomic_DNA"/>
</dbReference>
<dbReference type="EMBL" id="HE613800">
    <property type="protein sequence ID" value="CCE70073.1"/>
    <property type="molecule type" value="Genomic_DNA"/>
</dbReference>
<dbReference type="PIR" id="D75110">
    <property type="entry name" value="D75110"/>
</dbReference>
<dbReference type="PDB" id="6SW9">
    <property type="method" value="EM"/>
    <property type="resolution" value="4.20 A"/>
    <property type="chains" value="L=1-102"/>
</dbReference>
<dbReference type="PDB" id="6SWC">
    <property type="method" value="EM"/>
    <property type="resolution" value="3.30 A"/>
    <property type="chains" value="L=1-102"/>
</dbReference>
<dbReference type="PDB" id="6SWE">
    <property type="method" value="EM"/>
    <property type="resolution" value="3.10 A"/>
    <property type="chains" value="L=1-102"/>
</dbReference>
<dbReference type="PDB" id="7ZAG">
    <property type="method" value="EM"/>
    <property type="resolution" value="2.77 A"/>
    <property type="chains" value="L=1-102"/>
</dbReference>
<dbReference type="PDB" id="7ZAH">
    <property type="method" value="EM"/>
    <property type="resolution" value="2.70 A"/>
    <property type="chains" value="L=1-102"/>
</dbReference>
<dbReference type="PDB" id="7ZAI">
    <property type="method" value="EM"/>
    <property type="resolution" value="2.60 A"/>
    <property type="chains" value="L=1-102"/>
</dbReference>
<dbReference type="PDB" id="7ZHG">
    <property type="method" value="EM"/>
    <property type="resolution" value="2.25 A"/>
    <property type="chains" value="L=1-102"/>
</dbReference>
<dbReference type="PDBsum" id="6SW9"/>
<dbReference type="PDBsum" id="6SWC"/>
<dbReference type="PDBsum" id="6SWE"/>
<dbReference type="PDBsum" id="7ZAG"/>
<dbReference type="PDBsum" id="7ZAH"/>
<dbReference type="PDBsum" id="7ZAI"/>
<dbReference type="PDBsum" id="7ZHG"/>
<dbReference type="EMDB" id="EMD-10320"/>
<dbReference type="EMDB" id="EMD-10322"/>
<dbReference type="EMDB" id="EMD-10324"/>
<dbReference type="EMDB" id="EMD-14579"/>
<dbReference type="EMDB" id="EMD-14580"/>
<dbReference type="EMDB" id="EMD-14581"/>
<dbReference type="EMDB" id="EMD-14731"/>
<dbReference type="EMDB" id="EMD-8148"/>
<dbReference type="SMR" id="Q9V0V6"/>
<dbReference type="STRING" id="272844.PAB0466"/>
<dbReference type="KEGG" id="pab:PAB0466"/>
<dbReference type="PATRIC" id="fig|272844.11.peg.718"/>
<dbReference type="eggNOG" id="arCOG01758">
    <property type="taxonomic scope" value="Archaea"/>
</dbReference>
<dbReference type="HOGENOM" id="CLU_122625_0_1_2"/>
<dbReference type="OrthoDB" id="371736at2157"/>
<dbReference type="PhylomeDB" id="Q9V0V6"/>
<dbReference type="Proteomes" id="UP000000810">
    <property type="component" value="Chromosome"/>
</dbReference>
<dbReference type="Proteomes" id="UP000009139">
    <property type="component" value="Chromosome"/>
</dbReference>
<dbReference type="GO" id="GO:0015935">
    <property type="term" value="C:small ribosomal subunit"/>
    <property type="evidence" value="ECO:0007669"/>
    <property type="project" value="InterPro"/>
</dbReference>
<dbReference type="GO" id="GO:0003735">
    <property type="term" value="F:structural constituent of ribosome"/>
    <property type="evidence" value="ECO:0007669"/>
    <property type="project" value="InterPro"/>
</dbReference>
<dbReference type="GO" id="GO:0000049">
    <property type="term" value="F:tRNA binding"/>
    <property type="evidence" value="ECO:0007669"/>
    <property type="project" value="UniProtKB-UniRule"/>
</dbReference>
<dbReference type="GO" id="GO:0006412">
    <property type="term" value="P:translation"/>
    <property type="evidence" value="ECO:0007669"/>
    <property type="project" value="UniProtKB-UniRule"/>
</dbReference>
<dbReference type="FunFam" id="3.30.70.600:FF:000004">
    <property type="entry name" value="30S ribosomal protein S10"/>
    <property type="match status" value="1"/>
</dbReference>
<dbReference type="Gene3D" id="3.30.70.600">
    <property type="entry name" value="Ribosomal protein S10 domain"/>
    <property type="match status" value="1"/>
</dbReference>
<dbReference type="HAMAP" id="MF_00508">
    <property type="entry name" value="Ribosomal_uS10"/>
    <property type="match status" value="1"/>
</dbReference>
<dbReference type="InterPro" id="IPR001848">
    <property type="entry name" value="Ribosomal_uS10"/>
</dbReference>
<dbReference type="InterPro" id="IPR018268">
    <property type="entry name" value="Ribosomal_uS10_CS"/>
</dbReference>
<dbReference type="InterPro" id="IPR027486">
    <property type="entry name" value="Ribosomal_uS10_dom"/>
</dbReference>
<dbReference type="InterPro" id="IPR036838">
    <property type="entry name" value="Ribosomal_uS10_dom_sf"/>
</dbReference>
<dbReference type="InterPro" id="IPR005729">
    <property type="entry name" value="Ribosomal_uS10_euk/arc"/>
</dbReference>
<dbReference type="NCBIfam" id="TIGR01046">
    <property type="entry name" value="uS10_euk_arch"/>
    <property type="match status" value="1"/>
</dbReference>
<dbReference type="PANTHER" id="PTHR11700">
    <property type="entry name" value="30S RIBOSOMAL PROTEIN S10 FAMILY MEMBER"/>
    <property type="match status" value="1"/>
</dbReference>
<dbReference type="Pfam" id="PF00338">
    <property type="entry name" value="Ribosomal_S10"/>
    <property type="match status" value="1"/>
</dbReference>
<dbReference type="PRINTS" id="PR00971">
    <property type="entry name" value="RIBOSOMALS10"/>
</dbReference>
<dbReference type="SMART" id="SM01403">
    <property type="entry name" value="Ribosomal_S10"/>
    <property type="match status" value="1"/>
</dbReference>
<dbReference type="SUPFAM" id="SSF54999">
    <property type="entry name" value="Ribosomal protein S10"/>
    <property type="match status" value="1"/>
</dbReference>
<dbReference type="PROSITE" id="PS00361">
    <property type="entry name" value="RIBOSOMAL_S10"/>
    <property type="match status" value="1"/>
</dbReference>
<gene>
    <name evidence="1" type="primary">rps10</name>
    <name type="ordered locus">PYRAB06840</name>
    <name type="ORF">PAB0466</name>
</gene>
<protein>
    <recommendedName>
        <fullName evidence="1">Small ribosomal subunit protein uS10</fullName>
    </recommendedName>
    <alternativeName>
        <fullName evidence="2">30S ribosomal protein S10</fullName>
    </alternativeName>
</protein>
<evidence type="ECO:0000255" key="1">
    <source>
        <dbReference type="HAMAP-Rule" id="MF_00508"/>
    </source>
</evidence>
<evidence type="ECO:0000305" key="2"/>
<evidence type="ECO:0007829" key="3">
    <source>
        <dbReference type="PDB" id="7ZHG"/>
    </source>
</evidence>
<reference key="1">
    <citation type="journal article" date="2003" name="Mol. Microbiol.">
        <title>An integrated analysis of the genome of the hyperthermophilic archaeon Pyrococcus abyssi.</title>
        <authorList>
            <person name="Cohen G.N."/>
            <person name="Barbe V."/>
            <person name="Flament D."/>
            <person name="Galperin M."/>
            <person name="Heilig R."/>
            <person name="Lecompte O."/>
            <person name="Poch O."/>
            <person name="Prieur D."/>
            <person name="Querellou J."/>
            <person name="Ripp R."/>
            <person name="Thierry J.-C."/>
            <person name="Van der Oost J."/>
            <person name="Weissenbach J."/>
            <person name="Zivanovic Y."/>
            <person name="Forterre P."/>
        </authorList>
    </citation>
    <scope>NUCLEOTIDE SEQUENCE [LARGE SCALE GENOMIC DNA]</scope>
    <source>
        <strain>GE5 / Orsay</strain>
    </source>
</reference>
<reference key="2">
    <citation type="journal article" date="2012" name="Curr. Microbiol.">
        <title>Re-annotation of two hyperthermophilic archaea Pyrococcus abyssi GE5 and Pyrococcus furiosus DSM 3638.</title>
        <authorList>
            <person name="Gao J."/>
            <person name="Wang J."/>
        </authorList>
    </citation>
    <scope>GENOME REANNOTATION</scope>
    <source>
        <strain>GE5 / Orsay</strain>
    </source>
</reference>
<keyword id="KW-0002">3D-structure</keyword>
<keyword id="KW-0687">Ribonucleoprotein</keyword>
<keyword id="KW-0689">Ribosomal protein</keyword>